<name>PSUG_SACEN</name>
<proteinExistence type="inferred from homology"/>
<dbReference type="EC" id="4.2.1.70" evidence="1"/>
<dbReference type="EMBL" id="AM420293">
    <property type="protein sequence ID" value="CAM00554.1"/>
    <property type="molecule type" value="Genomic_DNA"/>
</dbReference>
<dbReference type="RefSeq" id="WP_009945439.1">
    <property type="nucleotide sequence ID" value="NC_009142.1"/>
</dbReference>
<dbReference type="SMR" id="A4F929"/>
<dbReference type="STRING" id="405948.SACE_1229"/>
<dbReference type="KEGG" id="sen:SACE_1229"/>
<dbReference type="eggNOG" id="COG2313">
    <property type="taxonomic scope" value="Bacteria"/>
</dbReference>
<dbReference type="HOGENOM" id="CLU_012201_0_1_11"/>
<dbReference type="OrthoDB" id="9805870at2"/>
<dbReference type="Proteomes" id="UP000006728">
    <property type="component" value="Chromosome"/>
</dbReference>
<dbReference type="GO" id="GO:0005737">
    <property type="term" value="C:cytoplasm"/>
    <property type="evidence" value="ECO:0007669"/>
    <property type="project" value="TreeGrafter"/>
</dbReference>
<dbReference type="GO" id="GO:0016798">
    <property type="term" value="F:hydrolase activity, acting on glycosyl bonds"/>
    <property type="evidence" value="ECO:0007669"/>
    <property type="project" value="UniProtKB-KW"/>
</dbReference>
<dbReference type="GO" id="GO:0046872">
    <property type="term" value="F:metal ion binding"/>
    <property type="evidence" value="ECO:0007669"/>
    <property type="project" value="UniProtKB-KW"/>
</dbReference>
<dbReference type="GO" id="GO:0004730">
    <property type="term" value="F:pseudouridylate synthase activity"/>
    <property type="evidence" value="ECO:0007669"/>
    <property type="project" value="UniProtKB-UniRule"/>
</dbReference>
<dbReference type="GO" id="GO:0046113">
    <property type="term" value="P:nucleobase catabolic process"/>
    <property type="evidence" value="ECO:0007669"/>
    <property type="project" value="UniProtKB-UniRule"/>
</dbReference>
<dbReference type="Gene3D" id="3.40.1790.10">
    <property type="entry name" value="Indigoidine synthase domain"/>
    <property type="match status" value="1"/>
</dbReference>
<dbReference type="HAMAP" id="MF_01876">
    <property type="entry name" value="PsiMP_glycosidase"/>
    <property type="match status" value="1"/>
</dbReference>
<dbReference type="InterPro" id="IPR022830">
    <property type="entry name" value="Indigdn_synthA-like"/>
</dbReference>
<dbReference type="InterPro" id="IPR007342">
    <property type="entry name" value="PsuG"/>
</dbReference>
<dbReference type="PANTHER" id="PTHR42909:SF1">
    <property type="entry name" value="CARBOHYDRATE KINASE PFKB DOMAIN-CONTAINING PROTEIN"/>
    <property type="match status" value="1"/>
</dbReference>
<dbReference type="PANTHER" id="PTHR42909">
    <property type="entry name" value="ZGC:136858"/>
    <property type="match status" value="1"/>
</dbReference>
<dbReference type="Pfam" id="PF04227">
    <property type="entry name" value="Indigoidine_A"/>
    <property type="match status" value="1"/>
</dbReference>
<dbReference type="SUPFAM" id="SSF110581">
    <property type="entry name" value="Indigoidine synthase A-like"/>
    <property type="match status" value="1"/>
</dbReference>
<gene>
    <name evidence="1" type="primary">psuG</name>
    <name type="ordered locus">SACE_1229</name>
</gene>
<comment type="function">
    <text evidence="1">Catalyzes the reversible cleavage of pseudouridine 5'-phosphate (PsiMP) to ribose 5-phosphate and uracil. Functions biologically in the cleavage direction, as part of a pseudouridine degradation pathway.</text>
</comment>
<comment type="catalytic activity">
    <reaction evidence="1">
        <text>D-ribose 5-phosphate + uracil = psi-UMP + H2O</text>
        <dbReference type="Rhea" id="RHEA:18337"/>
        <dbReference type="ChEBI" id="CHEBI:15377"/>
        <dbReference type="ChEBI" id="CHEBI:17568"/>
        <dbReference type="ChEBI" id="CHEBI:58380"/>
        <dbReference type="ChEBI" id="CHEBI:78346"/>
        <dbReference type="EC" id="4.2.1.70"/>
    </reaction>
</comment>
<comment type="cofactor">
    <cofactor evidence="1">
        <name>Mn(2+)</name>
        <dbReference type="ChEBI" id="CHEBI:29035"/>
    </cofactor>
    <text evidence="1">Binds 1 Mn(2+) ion per subunit.</text>
</comment>
<comment type="subunit">
    <text evidence="1">Homotrimer.</text>
</comment>
<comment type="similarity">
    <text evidence="1">Belongs to the pseudouridine-5'-phosphate glycosidase family.</text>
</comment>
<organism>
    <name type="scientific">Saccharopolyspora erythraea (strain ATCC 11635 / DSM 40517 / JCM 4748 / NBRC 13426 / NCIMB 8594 / NRRL 2338)</name>
    <dbReference type="NCBI Taxonomy" id="405948"/>
    <lineage>
        <taxon>Bacteria</taxon>
        <taxon>Bacillati</taxon>
        <taxon>Actinomycetota</taxon>
        <taxon>Actinomycetes</taxon>
        <taxon>Pseudonocardiales</taxon>
        <taxon>Pseudonocardiaceae</taxon>
        <taxon>Saccharopolyspora</taxon>
    </lineage>
</organism>
<protein>
    <recommendedName>
        <fullName evidence="1">Pseudouridine-5'-phosphate glycosidase</fullName>
        <shortName evidence="1">PsiMP glycosidase</shortName>
        <ecNumber evidence="1">4.2.1.70</ecNumber>
    </recommendedName>
</protein>
<sequence length="303" mass="31845">MPLSLPVISTEVRQALDAGRPVVALESTIITHGLPRPRNLAVARDAERQLRDAGVVPATIGVVAGTPTVGLTGEQIEELAADEAAVKISTRDLPVAVARGASGGTTVAATAFLARKAGIRVFATGGLGGVHHGAATTFDESADLVTLASTPLVLVSAGAKSILDLAATLERLETLNIPVVGYRTRRFPGFYVADSGHDLEHSVDTPQEVAALVEARDALELRSALLVANPIPPERQLDPELHRRVLAEAWEEAERQGISGHDSTPFLLDHIRRATGDRSLEVNIDVYQNNVALGASIARAMAG</sequence>
<reference key="1">
    <citation type="journal article" date="2007" name="Nat. Biotechnol.">
        <title>Complete genome sequence of the erythromycin-producing bacterium Saccharopolyspora erythraea NRRL23338.</title>
        <authorList>
            <person name="Oliynyk M."/>
            <person name="Samborskyy M."/>
            <person name="Lester J.B."/>
            <person name="Mironenko T."/>
            <person name="Scott N."/>
            <person name="Dickens S."/>
            <person name="Haydock S.F."/>
            <person name="Leadlay P.F."/>
        </authorList>
    </citation>
    <scope>NUCLEOTIDE SEQUENCE [LARGE SCALE GENOMIC DNA]</scope>
    <source>
        <strain>ATCC 11635 / DSM 40517 / JCM 4748 / NBRC 13426 / NCIMB 8594 / NRRL 2338</strain>
    </source>
</reference>
<accession>A4F929</accession>
<feature type="chain" id="PRO_0000390545" description="Pseudouridine-5'-phosphate glycosidase">
    <location>
        <begin position="1"/>
        <end position="303"/>
    </location>
</feature>
<feature type="active site" description="Proton donor" evidence="1">
    <location>
        <position position="26"/>
    </location>
</feature>
<feature type="active site" description="Nucleophile" evidence="1">
    <location>
        <position position="160"/>
    </location>
</feature>
<feature type="binding site" evidence="1">
    <location>
        <position position="87"/>
    </location>
    <ligand>
        <name>substrate</name>
    </ligand>
</feature>
<feature type="binding site" evidence="1">
    <location>
        <position position="107"/>
    </location>
    <ligand>
        <name>substrate</name>
    </ligand>
</feature>
<feature type="binding site" evidence="1">
    <location>
        <position position="139"/>
    </location>
    <ligand>
        <name>Mn(2+)</name>
        <dbReference type="ChEBI" id="CHEBI:29035"/>
    </ligand>
</feature>
<feature type="binding site" evidence="1">
    <location>
        <begin position="141"/>
        <end position="143"/>
    </location>
    <ligand>
        <name>substrate</name>
    </ligand>
</feature>
<evidence type="ECO:0000255" key="1">
    <source>
        <dbReference type="HAMAP-Rule" id="MF_01876"/>
    </source>
</evidence>
<keyword id="KW-0326">Glycosidase</keyword>
<keyword id="KW-0378">Hydrolase</keyword>
<keyword id="KW-0456">Lyase</keyword>
<keyword id="KW-0464">Manganese</keyword>
<keyword id="KW-0479">Metal-binding</keyword>
<keyword id="KW-1185">Reference proteome</keyword>